<organism>
    <name type="scientific">Burkholderia orbicola (strain AU 1054)</name>
    <dbReference type="NCBI Taxonomy" id="331271"/>
    <lineage>
        <taxon>Bacteria</taxon>
        <taxon>Pseudomonadati</taxon>
        <taxon>Pseudomonadota</taxon>
        <taxon>Betaproteobacteria</taxon>
        <taxon>Burkholderiales</taxon>
        <taxon>Burkholderiaceae</taxon>
        <taxon>Burkholderia</taxon>
        <taxon>Burkholderia cepacia complex</taxon>
        <taxon>Burkholderia orbicola</taxon>
    </lineage>
</organism>
<comment type="function">
    <text evidence="1">Bifunctional enzyme with both catalase and broad-spectrum peroxidase activity.</text>
</comment>
<comment type="catalytic activity">
    <reaction evidence="1">
        <text>H2O2 + AH2 = A + 2 H2O</text>
        <dbReference type="Rhea" id="RHEA:30275"/>
        <dbReference type="ChEBI" id="CHEBI:13193"/>
        <dbReference type="ChEBI" id="CHEBI:15377"/>
        <dbReference type="ChEBI" id="CHEBI:16240"/>
        <dbReference type="ChEBI" id="CHEBI:17499"/>
        <dbReference type="EC" id="1.11.1.21"/>
    </reaction>
</comment>
<comment type="catalytic activity">
    <reaction evidence="1">
        <text>2 H2O2 = O2 + 2 H2O</text>
        <dbReference type="Rhea" id="RHEA:20309"/>
        <dbReference type="ChEBI" id="CHEBI:15377"/>
        <dbReference type="ChEBI" id="CHEBI:15379"/>
        <dbReference type="ChEBI" id="CHEBI:16240"/>
        <dbReference type="EC" id="1.11.1.21"/>
    </reaction>
</comment>
<comment type="cofactor">
    <cofactor evidence="1">
        <name>heme b</name>
        <dbReference type="ChEBI" id="CHEBI:60344"/>
    </cofactor>
    <text evidence="1">Binds 1 heme b (iron(II)-protoporphyrin IX) group per dimer.</text>
</comment>
<comment type="subunit">
    <text evidence="1">Homodimer or homotetramer.</text>
</comment>
<comment type="PTM">
    <text evidence="1">Formation of the three residue Trp-Tyr-Met cross-link is important for the catalase, but not the peroxidase activity of the enzyme.</text>
</comment>
<comment type="similarity">
    <text evidence="1">Belongs to the peroxidase family. Peroxidase/catalase subfamily.</text>
</comment>
<gene>
    <name evidence="1" type="primary">katG1</name>
    <name type="ordered locus">Bcen_0242</name>
</gene>
<name>KATG1_BURO1</name>
<protein>
    <recommendedName>
        <fullName evidence="1">Catalase-peroxidase 1</fullName>
        <shortName evidence="1">CP 1</shortName>
        <ecNumber evidence="1">1.11.1.21</ecNumber>
    </recommendedName>
    <alternativeName>
        <fullName evidence="1">Peroxidase/catalase 1</fullName>
    </alternativeName>
</protein>
<accession>Q1BYZ9</accession>
<feature type="chain" id="PRO_0000354732" description="Catalase-peroxidase 1">
    <location>
        <begin position="1"/>
        <end position="728"/>
    </location>
</feature>
<feature type="active site" description="Proton acceptor" evidence="1">
    <location>
        <position position="92"/>
    </location>
</feature>
<feature type="binding site" description="axial binding residue" evidence="1">
    <location>
        <position position="259"/>
    </location>
    <ligand>
        <name>heme b</name>
        <dbReference type="ChEBI" id="CHEBI:60344"/>
    </ligand>
    <ligandPart>
        <name>Fe</name>
        <dbReference type="ChEBI" id="CHEBI:18248"/>
    </ligandPart>
</feature>
<feature type="site" description="Transition state stabilizer" evidence="1">
    <location>
        <position position="88"/>
    </location>
</feature>
<feature type="cross-link" description="Tryptophyl-tyrosyl-methioninium (Trp-Tyr) (with M-244)" evidence="1">
    <location>
        <begin position="91"/>
        <end position="218"/>
    </location>
</feature>
<feature type="cross-link" description="Tryptophyl-tyrosyl-methioninium (Tyr-Met) (with W-91)" evidence="1">
    <location>
        <begin position="218"/>
        <end position="244"/>
    </location>
</feature>
<evidence type="ECO:0000255" key="1">
    <source>
        <dbReference type="HAMAP-Rule" id="MF_01961"/>
    </source>
</evidence>
<keyword id="KW-0349">Heme</keyword>
<keyword id="KW-0376">Hydrogen peroxide</keyword>
<keyword id="KW-0408">Iron</keyword>
<keyword id="KW-0479">Metal-binding</keyword>
<keyword id="KW-0560">Oxidoreductase</keyword>
<keyword id="KW-0575">Peroxidase</keyword>
<sequence>MSNETKCPFNHTAGSGTTNKDWWPNQLNLNVLHRHSALSDPMDPDFDYAEAFKKLDLAAVKQDLHALMTTSQDWWPADFGHYGGLFVRMAWHSAGTYRTADGRGGAGGGQQRFAPLNSWPDNVSLDKARRLLWPIKQKYGRNISWADLLILTGNVALESMGFKTFGYAGGRADTWEPDDVYWGSEKIWLELSGGPNSRYTGKRELESPLAAVQMGLIYVNPEGPDGNPDPVAAAHDIRETFARMAMNDEETVALIAGGHTFGKTHGAGPASNVGPEPEAAGLEEQGLGWKSTFGTGKGKDTITSGLEVTWTSTPTKWSNDFFKHLFSYEWELTKSPAGAHQWVAKDAGEVIPDAYDASKKHRPTMLTTDLSLRFDPAYEKISRRFYENPAEFADAFARAWFKLTHRDMGPRARYLGPEVPAEHLLWQDPIPAVDHPLIDAADVAALKAKVLATGLSVSQLVSTAWASAATFRGSDKRGGANGARIRLAPQKDWEVNQPAALATVLETLEGVQKAFNDAQTDGKKVSLADLIVLAGAAGVEQAAKNAGIAISVPFAPGRMDASQEETDVDAMAVLEPVADGFRNYLKSAYKTPAEALLVDKAQLLTLTAPEMTVLVGGLRVLGANVGDSKHGVFTDRPGTLSNDFFANLLDMGTEWKPVSAANDVFEGRDRATGAVKWTGTRVDLIFGSHSQLRALAEVYGSADAQEKFVRDFVAAWNKVMNLDRFDLA</sequence>
<reference key="1">
    <citation type="submission" date="2006-05" db="EMBL/GenBank/DDBJ databases">
        <title>Complete sequence of chromosome 1 of Burkholderia cenocepacia AU 1054.</title>
        <authorList>
            <consortium name="US DOE Joint Genome Institute"/>
            <person name="Copeland A."/>
            <person name="Lucas S."/>
            <person name="Lapidus A."/>
            <person name="Barry K."/>
            <person name="Detter J.C."/>
            <person name="Glavina del Rio T."/>
            <person name="Hammon N."/>
            <person name="Israni S."/>
            <person name="Dalin E."/>
            <person name="Tice H."/>
            <person name="Pitluck S."/>
            <person name="Chain P."/>
            <person name="Malfatti S."/>
            <person name="Shin M."/>
            <person name="Vergez L."/>
            <person name="Schmutz J."/>
            <person name="Larimer F."/>
            <person name="Land M."/>
            <person name="Hauser L."/>
            <person name="Kyrpides N."/>
            <person name="Lykidis A."/>
            <person name="LiPuma J.J."/>
            <person name="Konstantinidis K."/>
            <person name="Tiedje J.M."/>
            <person name="Richardson P."/>
        </authorList>
    </citation>
    <scope>NUCLEOTIDE SEQUENCE [LARGE SCALE GENOMIC DNA]</scope>
    <source>
        <strain>AU 1054</strain>
    </source>
</reference>
<proteinExistence type="inferred from homology"/>
<dbReference type="EC" id="1.11.1.21" evidence="1"/>
<dbReference type="EMBL" id="CP000378">
    <property type="protein sequence ID" value="ABF75156.1"/>
    <property type="molecule type" value="Genomic_DNA"/>
</dbReference>
<dbReference type="SMR" id="Q1BYZ9"/>
<dbReference type="PeroxiBase" id="2292">
    <property type="entry name" value="BcenCP01_AU1054"/>
</dbReference>
<dbReference type="HOGENOM" id="CLU_025424_2_0_4"/>
<dbReference type="GO" id="GO:0005829">
    <property type="term" value="C:cytosol"/>
    <property type="evidence" value="ECO:0007669"/>
    <property type="project" value="TreeGrafter"/>
</dbReference>
<dbReference type="GO" id="GO:0004096">
    <property type="term" value="F:catalase activity"/>
    <property type="evidence" value="ECO:0007669"/>
    <property type="project" value="UniProtKB-UniRule"/>
</dbReference>
<dbReference type="GO" id="GO:0020037">
    <property type="term" value="F:heme binding"/>
    <property type="evidence" value="ECO:0007669"/>
    <property type="project" value="InterPro"/>
</dbReference>
<dbReference type="GO" id="GO:0046872">
    <property type="term" value="F:metal ion binding"/>
    <property type="evidence" value="ECO:0007669"/>
    <property type="project" value="UniProtKB-KW"/>
</dbReference>
<dbReference type="GO" id="GO:0070301">
    <property type="term" value="P:cellular response to hydrogen peroxide"/>
    <property type="evidence" value="ECO:0007669"/>
    <property type="project" value="TreeGrafter"/>
</dbReference>
<dbReference type="GO" id="GO:0042744">
    <property type="term" value="P:hydrogen peroxide catabolic process"/>
    <property type="evidence" value="ECO:0007669"/>
    <property type="project" value="UniProtKB-KW"/>
</dbReference>
<dbReference type="CDD" id="cd00649">
    <property type="entry name" value="catalase_peroxidase_1"/>
    <property type="match status" value="1"/>
</dbReference>
<dbReference type="CDD" id="cd08200">
    <property type="entry name" value="catalase_peroxidase_2"/>
    <property type="match status" value="1"/>
</dbReference>
<dbReference type="FunFam" id="1.10.420.10:FF:000002">
    <property type="entry name" value="Catalase-peroxidase"/>
    <property type="match status" value="1"/>
</dbReference>
<dbReference type="FunFam" id="1.10.420.10:FF:000004">
    <property type="entry name" value="Catalase-peroxidase"/>
    <property type="match status" value="1"/>
</dbReference>
<dbReference type="FunFam" id="1.10.520.10:FF:000002">
    <property type="entry name" value="Catalase-peroxidase"/>
    <property type="match status" value="1"/>
</dbReference>
<dbReference type="FunFam" id="1.10.520.10:FF:000004">
    <property type="entry name" value="Catalase-peroxidase"/>
    <property type="match status" value="1"/>
</dbReference>
<dbReference type="Gene3D" id="1.10.520.10">
    <property type="match status" value="2"/>
</dbReference>
<dbReference type="Gene3D" id="1.10.420.10">
    <property type="entry name" value="Peroxidase, domain 2"/>
    <property type="match status" value="2"/>
</dbReference>
<dbReference type="HAMAP" id="MF_01961">
    <property type="entry name" value="Catal_peroxid"/>
    <property type="match status" value="1"/>
</dbReference>
<dbReference type="InterPro" id="IPR000763">
    <property type="entry name" value="Catalase_peroxidase"/>
</dbReference>
<dbReference type="InterPro" id="IPR002016">
    <property type="entry name" value="Haem_peroxidase"/>
</dbReference>
<dbReference type="InterPro" id="IPR010255">
    <property type="entry name" value="Haem_peroxidase_sf"/>
</dbReference>
<dbReference type="InterPro" id="IPR019794">
    <property type="entry name" value="Peroxidases_AS"/>
</dbReference>
<dbReference type="InterPro" id="IPR019793">
    <property type="entry name" value="Peroxidases_heam-ligand_BS"/>
</dbReference>
<dbReference type="NCBIfam" id="TIGR00198">
    <property type="entry name" value="cat_per_HPI"/>
    <property type="match status" value="1"/>
</dbReference>
<dbReference type="NCBIfam" id="NF011635">
    <property type="entry name" value="PRK15061.1"/>
    <property type="match status" value="1"/>
</dbReference>
<dbReference type="PANTHER" id="PTHR30555:SF0">
    <property type="entry name" value="CATALASE-PEROXIDASE"/>
    <property type="match status" value="1"/>
</dbReference>
<dbReference type="PANTHER" id="PTHR30555">
    <property type="entry name" value="HYDROPEROXIDASE I, BIFUNCTIONAL CATALASE-PEROXIDASE"/>
    <property type="match status" value="1"/>
</dbReference>
<dbReference type="Pfam" id="PF00141">
    <property type="entry name" value="peroxidase"/>
    <property type="match status" value="2"/>
</dbReference>
<dbReference type="PRINTS" id="PR00460">
    <property type="entry name" value="BPEROXIDASE"/>
</dbReference>
<dbReference type="PRINTS" id="PR00458">
    <property type="entry name" value="PEROXIDASE"/>
</dbReference>
<dbReference type="SUPFAM" id="SSF48113">
    <property type="entry name" value="Heme-dependent peroxidases"/>
    <property type="match status" value="2"/>
</dbReference>
<dbReference type="PROSITE" id="PS00435">
    <property type="entry name" value="PEROXIDASE_1"/>
    <property type="match status" value="1"/>
</dbReference>
<dbReference type="PROSITE" id="PS00436">
    <property type="entry name" value="PEROXIDASE_2"/>
    <property type="match status" value="1"/>
</dbReference>
<dbReference type="PROSITE" id="PS50873">
    <property type="entry name" value="PEROXIDASE_4"/>
    <property type="match status" value="1"/>
</dbReference>